<proteinExistence type="inferred from homology"/>
<name>NCCH_ALCXX</name>
<evidence type="ECO:0000250" key="1"/>
<evidence type="ECO:0000305" key="2"/>
<keyword id="KW-0104">Cadmium</keyword>
<keyword id="KW-0105">Cadmium resistance</keyword>
<keyword id="KW-0170">Cobalt</keyword>
<keyword id="KW-0238">DNA-binding</keyword>
<keyword id="KW-0533">Nickel</keyword>
<keyword id="KW-0614">Plasmid</keyword>
<keyword id="KW-0731">Sigma factor</keyword>
<keyword id="KW-0804">Transcription</keyword>
<keyword id="KW-0805">Transcription regulation</keyword>
<sequence length="186" mass="20749">MTDPSVDEALARRAAQGDQYAFGQLVQRHGRALAQAARSFGVPESDVDDIVQDTFIAAWHALDDFDSDKLFRPWLFRIGLNKMRDLRRFRQVRHFLFGAKDIEDAELTSDVPGPEREVSARLELAKIMQVLNRLDLASREIIILTSFVGMSHPEAAMALGTSAKAVESRVARARAKLTALLQSSQV</sequence>
<geneLocation type="plasmid">
    <name>pTOM9</name>
</geneLocation>
<gene>
    <name type="primary">nccH</name>
</gene>
<dbReference type="EMBL" id="L31363">
    <property type="protein sequence ID" value="AAA65103.1"/>
    <property type="molecule type" value="Genomic_DNA"/>
</dbReference>
<dbReference type="PIR" id="I39577">
    <property type="entry name" value="I39577"/>
</dbReference>
<dbReference type="SMR" id="Q44583"/>
<dbReference type="GO" id="GO:0003677">
    <property type="term" value="F:DNA binding"/>
    <property type="evidence" value="ECO:0007669"/>
    <property type="project" value="UniProtKB-KW"/>
</dbReference>
<dbReference type="GO" id="GO:0016987">
    <property type="term" value="F:sigma factor activity"/>
    <property type="evidence" value="ECO:0007669"/>
    <property type="project" value="UniProtKB-KW"/>
</dbReference>
<dbReference type="GO" id="GO:0006352">
    <property type="term" value="P:DNA-templated transcription initiation"/>
    <property type="evidence" value="ECO:0007669"/>
    <property type="project" value="InterPro"/>
</dbReference>
<dbReference type="GO" id="GO:0046686">
    <property type="term" value="P:response to cadmium ion"/>
    <property type="evidence" value="ECO:0007669"/>
    <property type="project" value="UniProtKB-KW"/>
</dbReference>
<dbReference type="CDD" id="cd06171">
    <property type="entry name" value="Sigma70_r4"/>
    <property type="match status" value="1"/>
</dbReference>
<dbReference type="Gene3D" id="1.10.1740.10">
    <property type="match status" value="1"/>
</dbReference>
<dbReference type="Gene3D" id="1.10.10.10">
    <property type="entry name" value="Winged helix-like DNA-binding domain superfamily/Winged helix DNA-binding domain"/>
    <property type="match status" value="1"/>
</dbReference>
<dbReference type="InterPro" id="IPR039425">
    <property type="entry name" value="RNA_pol_sigma-70-like"/>
</dbReference>
<dbReference type="InterPro" id="IPR014284">
    <property type="entry name" value="RNA_pol_sigma-70_dom"/>
</dbReference>
<dbReference type="InterPro" id="IPR000838">
    <property type="entry name" value="RNA_pol_sigma70_ECF_CS"/>
</dbReference>
<dbReference type="InterPro" id="IPR007627">
    <property type="entry name" value="RNA_pol_sigma70_r2"/>
</dbReference>
<dbReference type="InterPro" id="IPR013249">
    <property type="entry name" value="RNA_pol_sigma70_r4_t2"/>
</dbReference>
<dbReference type="InterPro" id="IPR013325">
    <property type="entry name" value="RNA_pol_sigma_r2"/>
</dbReference>
<dbReference type="InterPro" id="IPR013324">
    <property type="entry name" value="RNA_pol_sigma_r3/r4-like"/>
</dbReference>
<dbReference type="InterPro" id="IPR036388">
    <property type="entry name" value="WH-like_DNA-bd_sf"/>
</dbReference>
<dbReference type="NCBIfam" id="TIGR02937">
    <property type="entry name" value="sigma70-ECF"/>
    <property type="match status" value="1"/>
</dbReference>
<dbReference type="PANTHER" id="PTHR43133">
    <property type="entry name" value="RNA POLYMERASE ECF-TYPE SIGMA FACTO"/>
    <property type="match status" value="1"/>
</dbReference>
<dbReference type="PANTHER" id="PTHR43133:SF8">
    <property type="entry name" value="RNA POLYMERASE SIGMA FACTOR HI_1459-RELATED"/>
    <property type="match status" value="1"/>
</dbReference>
<dbReference type="Pfam" id="PF04542">
    <property type="entry name" value="Sigma70_r2"/>
    <property type="match status" value="1"/>
</dbReference>
<dbReference type="Pfam" id="PF08281">
    <property type="entry name" value="Sigma70_r4_2"/>
    <property type="match status" value="1"/>
</dbReference>
<dbReference type="SUPFAM" id="SSF88946">
    <property type="entry name" value="Sigma2 domain of RNA polymerase sigma factors"/>
    <property type="match status" value="1"/>
</dbReference>
<dbReference type="SUPFAM" id="SSF88659">
    <property type="entry name" value="Sigma3 and sigma4 domains of RNA polymerase sigma factors"/>
    <property type="match status" value="1"/>
</dbReference>
<dbReference type="PROSITE" id="PS01063">
    <property type="entry name" value="SIGMA70_ECF"/>
    <property type="match status" value="1"/>
</dbReference>
<protein>
    <recommendedName>
        <fullName>RNA polymerase sigma factor NccH</fullName>
    </recommendedName>
</protein>
<accession>Q44583</accession>
<comment type="function">
    <text>Sigma factors are initiation factors that promote the attachment of RNA polymerase to specific initiation sites and are then released. This sigma factor regulates the genes for a membrane-located efflux system that confers resistance to nickel, cobalt and cadmium.</text>
</comment>
<comment type="similarity">
    <text evidence="2">Belongs to the sigma-70 factor family. ECF subfamily.</text>
</comment>
<organism>
    <name type="scientific">Alcaligenes xylosoxydans xylosoxydans</name>
    <name type="common">Achromobacter xylosoxidans</name>
    <dbReference type="NCBI Taxonomy" id="85698"/>
    <lineage>
        <taxon>Bacteria</taxon>
        <taxon>Pseudomonadati</taxon>
        <taxon>Pseudomonadota</taxon>
        <taxon>Betaproteobacteria</taxon>
        <taxon>Burkholderiales</taxon>
        <taxon>Alcaligenaceae</taxon>
        <taxon>Achromobacter</taxon>
    </lineage>
</organism>
<feature type="chain" id="PRO_0000094010" description="RNA polymerase sigma factor NccH">
    <location>
        <begin position="1"/>
        <end position="186"/>
    </location>
</feature>
<feature type="DNA-binding region" description="H-T-H motif" evidence="1">
    <location>
        <begin position="152"/>
        <end position="171"/>
    </location>
</feature>
<feature type="short sequence motif" description="Polymerase core binding">
    <location>
        <begin position="49"/>
        <end position="62"/>
    </location>
</feature>
<reference key="1">
    <citation type="journal article" date="1994" name="J. Bacteriol.">
        <title>Combined nickel-cobalt-cadmium resistance encoded by the ncc locus of Alcaligenes xylosoxidans 31A.</title>
        <authorList>
            <person name="Schmidt T."/>
            <person name="Schlegel H.G."/>
        </authorList>
    </citation>
    <scope>NUCLEOTIDE SEQUENCE [GENOMIC DNA]</scope>
    <source>
        <strain>31A</strain>
    </source>
</reference>